<proteinExistence type="inferred from homology"/>
<name>PPAC_BACCN</name>
<evidence type="ECO:0000255" key="1">
    <source>
        <dbReference type="HAMAP-Rule" id="MF_00207"/>
    </source>
</evidence>
<organism>
    <name type="scientific">Bacillus cytotoxicus (strain DSM 22905 / CIP 110041 / 391-98 / NVH 391-98)</name>
    <dbReference type="NCBI Taxonomy" id="315749"/>
    <lineage>
        <taxon>Bacteria</taxon>
        <taxon>Bacillati</taxon>
        <taxon>Bacillota</taxon>
        <taxon>Bacilli</taxon>
        <taxon>Bacillales</taxon>
        <taxon>Bacillaceae</taxon>
        <taxon>Bacillus</taxon>
        <taxon>Bacillus cereus group</taxon>
    </lineage>
</organism>
<feature type="chain" id="PRO_1000077975" description="Probable manganese-dependent inorganic pyrophosphatase">
    <location>
        <begin position="1"/>
        <end position="310"/>
    </location>
</feature>
<feature type="binding site" evidence="1">
    <location>
        <position position="9"/>
    </location>
    <ligand>
        <name>Mn(2+)</name>
        <dbReference type="ChEBI" id="CHEBI:29035"/>
        <label>1</label>
    </ligand>
</feature>
<feature type="binding site" evidence="1">
    <location>
        <position position="13"/>
    </location>
    <ligand>
        <name>Mn(2+)</name>
        <dbReference type="ChEBI" id="CHEBI:29035"/>
        <label>1</label>
    </ligand>
</feature>
<feature type="binding site" evidence="1">
    <location>
        <position position="15"/>
    </location>
    <ligand>
        <name>Mn(2+)</name>
        <dbReference type="ChEBI" id="CHEBI:29035"/>
        <label>2</label>
    </ligand>
</feature>
<feature type="binding site" evidence="1">
    <location>
        <position position="75"/>
    </location>
    <ligand>
        <name>Mn(2+)</name>
        <dbReference type="ChEBI" id="CHEBI:29035"/>
        <label>1</label>
    </ligand>
</feature>
<feature type="binding site" evidence="1">
    <location>
        <position position="75"/>
    </location>
    <ligand>
        <name>Mn(2+)</name>
        <dbReference type="ChEBI" id="CHEBI:29035"/>
        <label>2</label>
    </ligand>
</feature>
<feature type="binding site" evidence="1">
    <location>
        <position position="97"/>
    </location>
    <ligand>
        <name>Mn(2+)</name>
        <dbReference type="ChEBI" id="CHEBI:29035"/>
        <label>2</label>
    </ligand>
</feature>
<feature type="binding site" evidence="1">
    <location>
        <position position="149"/>
    </location>
    <ligand>
        <name>Mn(2+)</name>
        <dbReference type="ChEBI" id="CHEBI:29035"/>
        <label>2</label>
    </ligand>
</feature>
<sequence length="310" mass="33821">MEKVLVFGHKNPDTDAICSAIAYAELKKELGMNAEPVRLGEISGETQFALDYFKVEGPRFVETVANEVDNVILVDHNERQQSANDIESVRVLEVIDHHRIANFETSDPLYYRCEPVGCTATILNKMYKENGVAIRKEIAGLMLSAIISDSLLFKSPTCTEQDVAAARELAEIAGVDAESYGLEMLKAGADLSGKTMEQLISLDAKEFQMGNAKVEIAQVNAVDTNDVLVHQAELEKVISAVVEEKGLDLFLFVVTDILTNDSVGLAIGKAANAVEKAYNVTLENNTATLKGVVSRKKQIVPVLTETFQAL</sequence>
<comment type="catalytic activity">
    <reaction evidence="1">
        <text>diphosphate + H2O = 2 phosphate + H(+)</text>
        <dbReference type="Rhea" id="RHEA:24576"/>
        <dbReference type="ChEBI" id="CHEBI:15377"/>
        <dbReference type="ChEBI" id="CHEBI:15378"/>
        <dbReference type="ChEBI" id="CHEBI:33019"/>
        <dbReference type="ChEBI" id="CHEBI:43474"/>
        <dbReference type="EC" id="3.6.1.1"/>
    </reaction>
</comment>
<comment type="cofactor">
    <cofactor evidence="1">
        <name>Mn(2+)</name>
        <dbReference type="ChEBI" id="CHEBI:29035"/>
    </cofactor>
    <text evidence="1">Binds 2 manganese ions per subunit.</text>
</comment>
<comment type="subcellular location">
    <subcellularLocation>
        <location evidence="1">Cytoplasm</location>
    </subcellularLocation>
</comment>
<comment type="similarity">
    <text evidence="1">Belongs to the PPase class C family.</text>
</comment>
<reference key="1">
    <citation type="journal article" date="2008" name="Chem. Biol. Interact.">
        <title>Extending the Bacillus cereus group genomics to putative food-borne pathogens of different toxicity.</title>
        <authorList>
            <person name="Lapidus A."/>
            <person name="Goltsman E."/>
            <person name="Auger S."/>
            <person name="Galleron N."/>
            <person name="Segurens B."/>
            <person name="Dossat C."/>
            <person name="Land M.L."/>
            <person name="Broussolle V."/>
            <person name="Brillard J."/>
            <person name="Guinebretiere M.-H."/>
            <person name="Sanchis V."/>
            <person name="Nguen-the C."/>
            <person name="Lereclus D."/>
            <person name="Richardson P."/>
            <person name="Wincker P."/>
            <person name="Weissenbach J."/>
            <person name="Ehrlich S.D."/>
            <person name="Sorokin A."/>
        </authorList>
    </citation>
    <scope>NUCLEOTIDE SEQUENCE [LARGE SCALE GENOMIC DNA]</scope>
    <source>
        <strain>DSM 22905 / CIP 110041 / 391-98 / NVH 391-98</strain>
    </source>
</reference>
<gene>
    <name evidence="1" type="primary">ppaC</name>
    <name type="ordered locus">Bcer98_1924</name>
</gene>
<dbReference type="EC" id="3.6.1.1" evidence="1"/>
<dbReference type="EMBL" id="CP000764">
    <property type="protein sequence ID" value="ABS22209.1"/>
    <property type="molecule type" value="Genomic_DNA"/>
</dbReference>
<dbReference type="RefSeq" id="WP_012094402.1">
    <property type="nucleotide sequence ID" value="NC_009674.1"/>
</dbReference>
<dbReference type="SMR" id="A7GQ01"/>
<dbReference type="STRING" id="315749.Bcer98_1924"/>
<dbReference type="GeneID" id="33897231"/>
<dbReference type="KEGG" id="bcy:Bcer98_1924"/>
<dbReference type="eggNOG" id="COG1227">
    <property type="taxonomic scope" value="Bacteria"/>
</dbReference>
<dbReference type="HOGENOM" id="CLU_025243_0_1_9"/>
<dbReference type="OrthoDB" id="9766150at2"/>
<dbReference type="Proteomes" id="UP000002300">
    <property type="component" value="Chromosome"/>
</dbReference>
<dbReference type="GO" id="GO:0005737">
    <property type="term" value="C:cytoplasm"/>
    <property type="evidence" value="ECO:0007669"/>
    <property type="project" value="UniProtKB-SubCell"/>
</dbReference>
<dbReference type="GO" id="GO:0004427">
    <property type="term" value="F:inorganic diphosphate phosphatase activity"/>
    <property type="evidence" value="ECO:0007669"/>
    <property type="project" value="UniProtKB-UniRule"/>
</dbReference>
<dbReference type="GO" id="GO:0030145">
    <property type="term" value="F:manganese ion binding"/>
    <property type="evidence" value="ECO:0007669"/>
    <property type="project" value="UniProtKB-UniRule"/>
</dbReference>
<dbReference type="FunFam" id="3.10.310.20:FF:000001">
    <property type="entry name" value="Probable manganese-dependent inorganic pyrophosphatase"/>
    <property type="match status" value="1"/>
</dbReference>
<dbReference type="FunFam" id="3.90.1640.10:FF:000001">
    <property type="entry name" value="Probable manganese-dependent inorganic pyrophosphatase"/>
    <property type="match status" value="1"/>
</dbReference>
<dbReference type="Gene3D" id="3.10.310.20">
    <property type="entry name" value="DHHA2 domain"/>
    <property type="match status" value="1"/>
</dbReference>
<dbReference type="Gene3D" id="3.90.1640.10">
    <property type="entry name" value="inorganic pyrophosphatase (n-terminal core)"/>
    <property type="match status" value="1"/>
</dbReference>
<dbReference type="HAMAP" id="MF_00207">
    <property type="entry name" value="PPase_C"/>
    <property type="match status" value="1"/>
</dbReference>
<dbReference type="InterPro" id="IPR001667">
    <property type="entry name" value="DDH_dom"/>
</dbReference>
<dbReference type="InterPro" id="IPR038763">
    <property type="entry name" value="DHH_sf"/>
</dbReference>
<dbReference type="InterPro" id="IPR004097">
    <property type="entry name" value="DHHA2"/>
</dbReference>
<dbReference type="InterPro" id="IPR038222">
    <property type="entry name" value="DHHA2_dom_sf"/>
</dbReference>
<dbReference type="InterPro" id="IPR022934">
    <property type="entry name" value="Mn-dep_inorganic_PyrPase"/>
</dbReference>
<dbReference type="NCBIfam" id="NF003877">
    <property type="entry name" value="PRK05427.1"/>
    <property type="match status" value="1"/>
</dbReference>
<dbReference type="PANTHER" id="PTHR12112">
    <property type="entry name" value="BNIP - RELATED"/>
    <property type="match status" value="1"/>
</dbReference>
<dbReference type="PANTHER" id="PTHR12112:SF22">
    <property type="entry name" value="MANGANESE-DEPENDENT INORGANIC PYROPHOSPHATASE-RELATED"/>
    <property type="match status" value="1"/>
</dbReference>
<dbReference type="Pfam" id="PF01368">
    <property type="entry name" value="DHH"/>
    <property type="match status" value="1"/>
</dbReference>
<dbReference type="Pfam" id="PF02833">
    <property type="entry name" value="DHHA2"/>
    <property type="match status" value="1"/>
</dbReference>
<dbReference type="SMART" id="SM01131">
    <property type="entry name" value="DHHA2"/>
    <property type="match status" value="1"/>
</dbReference>
<dbReference type="SUPFAM" id="SSF64182">
    <property type="entry name" value="DHH phosphoesterases"/>
    <property type="match status" value="1"/>
</dbReference>
<accession>A7GQ01</accession>
<keyword id="KW-0963">Cytoplasm</keyword>
<keyword id="KW-0378">Hydrolase</keyword>
<keyword id="KW-0464">Manganese</keyword>
<keyword id="KW-0479">Metal-binding</keyword>
<protein>
    <recommendedName>
        <fullName evidence="1">Probable manganese-dependent inorganic pyrophosphatase</fullName>
        <ecNumber evidence="1">3.6.1.1</ecNumber>
    </recommendedName>
    <alternativeName>
        <fullName evidence="1">Pyrophosphate phospho-hydrolase</fullName>
        <shortName evidence="1">PPase</shortName>
    </alternativeName>
</protein>